<name>END7_BPT4</name>
<keyword id="KW-0002">3D-structure</keyword>
<keyword id="KW-0024">Alternative initiation</keyword>
<keyword id="KW-0106">Calcium</keyword>
<keyword id="KW-0255">Endonuclease</keyword>
<keyword id="KW-0378">Hydrolase</keyword>
<keyword id="KW-0479">Metal-binding</keyword>
<keyword id="KW-0540">Nuclease</keyword>
<keyword id="KW-1185">Reference proteome</keyword>
<keyword id="KW-0862">Zinc</keyword>
<organism>
    <name type="scientific">Enterobacteria phage T4</name>
    <name type="common">Bacteriophage T4</name>
    <dbReference type="NCBI Taxonomy" id="10665"/>
    <lineage>
        <taxon>Viruses</taxon>
        <taxon>Duplodnaviria</taxon>
        <taxon>Heunggongvirae</taxon>
        <taxon>Uroviricota</taxon>
        <taxon>Caudoviricetes</taxon>
        <taxon>Straboviridae</taxon>
        <taxon>Tevenvirinae</taxon>
        <taxon>Tequatrovirus</taxon>
    </lineage>
</organism>
<gene>
    <name type="primary">49</name>
</gene>
<proteinExistence type="evidence at protein level"/>
<evidence type="ECO:0000305" key="1"/>
<evidence type="ECO:0007829" key="2">
    <source>
        <dbReference type="PDB" id="1E7D"/>
    </source>
</evidence>
<evidence type="ECO:0007829" key="3">
    <source>
        <dbReference type="PDB" id="1E7L"/>
    </source>
</evidence>
<evidence type="ECO:0007829" key="4">
    <source>
        <dbReference type="PDB" id="2QNF"/>
    </source>
</evidence>
<dbReference type="EC" id="3.1.-.-"/>
<dbReference type="EMBL" id="X12629">
    <property type="protein sequence ID" value="CAA31148.1"/>
    <property type="molecule type" value="Genomic_DNA"/>
</dbReference>
<dbReference type="EMBL" id="X12629">
    <property type="protein sequence ID" value="CAA31149.1"/>
    <property type="molecule type" value="Genomic_DNA"/>
</dbReference>
<dbReference type="EMBL" id="Y00122">
    <property type="protein sequence ID" value="CAA68307.1"/>
    <property type="molecule type" value="Genomic_DNA"/>
</dbReference>
<dbReference type="EMBL" id="AF158101">
    <property type="protein sequence ID" value="AAD42477.1"/>
    <property type="molecule type" value="Genomic_DNA"/>
</dbReference>
<dbReference type="EMBL" id="AF158101">
    <property type="protein sequence ID" value="AAD42687.2"/>
    <property type="molecule type" value="Genomic_DNA"/>
</dbReference>
<dbReference type="PIR" id="S01906">
    <property type="entry name" value="ZNBPT9"/>
</dbReference>
<dbReference type="RefSeq" id="NP_049692.1">
    <property type="nucleotide sequence ID" value="NC_000866.4"/>
</dbReference>
<dbReference type="RefSeq" id="NP_049693.2">
    <property type="nucleotide sequence ID" value="NC_000866.4"/>
</dbReference>
<dbReference type="PDB" id="1E7D">
    <property type="method" value="X-ray"/>
    <property type="resolution" value="2.80 A"/>
    <property type="chains" value="A/B=1-157"/>
</dbReference>
<dbReference type="PDB" id="1E7L">
    <property type="method" value="X-ray"/>
    <property type="resolution" value="1.32 A"/>
    <property type="chains" value="A/B=1-157"/>
</dbReference>
<dbReference type="PDB" id="1EN7">
    <property type="method" value="X-ray"/>
    <property type="resolution" value="2.40 A"/>
    <property type="chains" value="A/B=1-157"/>
</dbReference>
<dbReference type="PDB" id="2QNC">
    <property type="method" value="X-ray"/>
    <property type="resolution" value="3.10 A"/>
    <property type="chains" value="A/B=1-157"/>
</dbReference>
<dbReference type="PDB" id="2QNF">
    <property type="method" value="X-ray"/>
    <property type="resolution" value="3.00 A"/>
    <property type="chains" value="A/B=1-157"/>
</dbReference>
<dbReference type="PDBsum" id="1E7D"/>
<dbReference type="PDBsum" id="1E7L"/>
<dbReference type="PDBsum" id="1EN7"/>
<dbReference type="PDBsum" id="2QNC"/>
<dbReference type="PDBsum" id="2QNF"/>
<dbReference type="SMR" id="P13340"/>
<dbReference type="DIP" id="DIP-60245N"/>
<dbReference type="GeneID" id="1258702"/>
<dbReference type="GeneID" id="1258772"/>
<dbReference type="KEGG" id="vg:1258702"/>
<dbReference type="KEGG" id="vg:1258772"/>
<dbReference type="OrthoDB" id="12062at10239"/>
<dbReference type="BRENDA" id="3.1.21.10">
    <property type="organism ID" value="732"/>
</dbReference>
<dbReference type="EvolutionaryTrace" id="P13340"/>
<dbReference type="Proteomes" id="UP000009087">
    <property type="component" value="Segment"/>
</dbReference>
<dbReference type="GO" id="GO:0004519">
    <property type="term" value="F:endonuclease activity"/>
    <property type="evidence" value="ECO:0000314"/>
    <property type="project" value="CACAO"/>
</dbReference>
<dbReference type="GO" id="GO:0046872">
    <property type="term" value="F:metal ion binding"/>
    <property type="evidence" value="ECO:0007669"/>
    <property type="project" value="UniProtKB-KW"/>
</dbReference>
<dbReference type="Gene3D" id="1.10.720.10">
    <property type="match status" value="1"/>
</dbReference>
<dbReference type="Gene3D" id="3.40.1800.10">
    <property type="entry name" value="His-Me finger endonucleases"/>
    <property type="match status" value="1"/>
</dbReference>
<dbReference type="InterPro" id="IPR004211">
    <property type="entry name" value="Endonuclease_7"/>
</dbReference>
<dbReference type="InterPro" id="IPR038563">
    <property type="entry name" value="Endonuclease_7_sf"/>
</dbReference>
<dbReference type="InterPro" id="IPR044925">
    <property type="entry name" value="His-Me_finger_sf"/>
</dbReference>
<dbReference type="InterPro" id="IPR036309">
    <property type="entry name" value="T4_recomb_endonuclease_dim_sf"/>
</dbReference>
<dbReference type="InterPro" id="IPR015208">
    <property type="entry name" value="T4_recomb_endonuclease_dimer"/>
</dbReference>
<dbReference type="Pfam" id="PF09124">
    <property type="entry name" value="Endonuc-dimeris"/>
    <property type="match status" value="1"/>
</dbReference>
<dbReference type="Pfam" id="PF02945">
    <property type="entry name" value="Endonuclease_7"/>
    <property type="match status" value="1"/>
</dbReference>
<dbReference type="SUPFAM" id="SSF54060">
    <property type="entry name" value="His-Me finger endonucleases"/>
    <property type="match status" value="1"/>
</dbReference>
<dbReference type="SUPFAM" id="SSF68918">
    <property type="entry name" value="Recombination endonuclease VII, C-terminal and dimerization domains"/>
    <property type="match status" value="1"/>
</dbReference>
<accession>P13340</accession>
<accession>Q38426</accession>
<accession>Q9T0V4</accession>
<sequence>MLLTGKLYKEEKQKFYDAQNGKCLICQRELNPDVQANHLDHDHELNGPKAGKVRGLLCNLCNAAEGQMKHKFNRSGLKGQGVDYLEWLENLLTYLKSDYTQNNIHPNFVGDKSKEFSRLGKEEMMAEMLQRGFEYNESDTKTQLIASFKKQLRKSLK</sequence>
<reference key="1">
    <citation type="journal article" date="1987" name="Nucleic Acids Res.">
        <title>Nucleotide sequence and primary structures of gene products coded for by the T4 genome between map positions 48.266 kb and 39.166 kb.</title>
        <authorList>
            <person name="Tomaschewski J."/>
            <person name="Rueger W."/>
        </authorList>
    </citation>
    <scope>NUCLEOTIDE SEQUENCE [GENOMIC DNA]</scope>
    <source>
        <strain>C</strain>
    </source>
</reference>
<reference key="2">
    <citation type="journal article" date="1988" name="Genetics">
        <title>Regulation of two nested proteins from gene 49 (recombination endonuclease VII) and of a lambda RexA-like protein of bacteriophage T4.</title>
        <authorList>
            <person name="Barth K.A."/>
            <person name="Powell D."/>
            <person name="Trupin M."/>
            <person name="Mosig G."/>
        </authorList>
    </citation>
    <scope>NUCLEOTIDE SEQUENCE [GENOMIC DNA]</scope>
    <scope>ALTERNATIVE INITIATION</scope>
</reference>
<reference key="3">
    <citation type="journal article" date="2003" name="Microbiol. Mol. Biol. Rev.">
        <title>Bacteriophage T4 genome.</title>
        <authorList>
            <person name="Miller E.S."/>
            <person name="Kutter E."/>
            <person name="Mosig G."/>
            <person name="Arisaka F."/>
            <person name="Kunisawa T."/>
            <person name="Ruger W."/>
        </authorList>
    </citation>
    <scope>NUCLEOTIDE SEQUENCE [LARGE SCALE GENOMIC DNA]</scope>
</reference>
<reference key="4">
    <citation type="journal article" date="1990" name="Eur. J. Biochem.">
        <title>Large-scale preparation of T4 endonuclease VII from over-expressing bacteria.</title>
        <authorList>
            <person name="Kosak H.G."/>
            <person name="Kemper B.W."/>
        </authorList>
    </citation>
    <scope>CHARACTERIZATION</scope>
</reference>
<reference key="5">
    <citation type="journal article" date="1999" name="EMBO J.">
        <title>X-ray structure of T4 endonuclease VII: a DNA junction resolvase with a novel fold and unusual domain-swapped dimer architecture.</title>
        <authorList>
            <person name="Raaijmakers H."/>
            <person name="Vix O."/>
            <person name="Toro I."/>
            <person name="Golz S."/>
            <person name="Kemper B."/>
            <person name="Suck D."/>
        </authorList>
    </citation>
    <scope>X-RAY CRYSTALLOGRAPHY (2.1 ANGSTROMS)</scope>
</reference>
<protein>
    <recommendedName>
        <fullName>Recombination endonuclease VII</fullName>
        <shortName>Endo VII</shortName>
        <ecNumber>3.1.-.-</ecNumber>
    </recommendedName>
    <alternativeName>
        <fullName>Gene product 49</fullName>
        <shortName>gp49</shortName>
    </alternativeName>
</protein>
<comment type="function">
    <text>Cleaves DNA cruciform and Y-structures as well as heteroduplex loops. Resolves Holliday junctions, recognizes a broad spectrum of DNA substrates ranging from branched DNAs to single base mismatches.</text>
</comment>
<comment type="cofactor">
    <cofactor>
        <name>Ca(2+)</name>
        <dbReference type="ChEBI" id="CHEBI:29108"/>
    </cofactor>
    <text>Binds 1 Ca(2+) ion per subunit.</text>
</comment>
<comment type="cofactor">
    <cofactor>
        <name>Zn(2+)</name>
        <dbReference type="ChEBI" id="CHEBI:29105"/>
    </cofactor>
    <text>Binds 1 zinc ion per subunit.</text>
</comment>
<comment type="subunit">
    <text>Homodimer.</text>
</comment>
<comment type="alternative products">
    <event type="alternative initiation"/>
    <isoform>
        <id>P13340-1</id>
        <name>Long</name>
        <sequence type="displayed"/>
    </isoform>
    <isoform>
        <id>P13340-2</id>
        <name>Short</name>
        <sequence type="described" ref="VSP_018678 VSP_018986"/>
    </isoform>
</comment>
<organismHost>
    <name type="scientific">Escherichia coli</name>
    <dbReference type="NCBI Taxonomy" id="562"/>
</organismHost>
<feature type="chain" id="PRO_0000003326" description="Recombination endonuclease VII">
    <location>
        <begin position="1"/>
        <end position="157"/>
    </location>
</feature>
<feature type="binding site">
    <location>
        <position position="23"/>
    </location>
    <ligand>
        <name>Zn(2+)</name>
        <dbReference type="ChEBI" id="CHEBI:29105"/>
    </ligand>
</feature>
<feature type="binding site">
    <location>
        <position position="26"/>
    </location>
    <ligand>
        <name>Zn(2+)</name>
        <dbReference type="ChEBI" id="CHEBI:29105"/>
    </ligand>
</feature>
<feature type="binding site">
    <location>
        <position position="40"/>
    </location>
    <ligand>
        <name>Ca(2+)</name>
        <dbReference type="ChEBI" id="CHEBI:29108"/>
    </ligand>
</feature>
<feature type="binding site">
    <location>
        <position position="58"/>
    </location>
    <ligand>
        <name>Zn(2+)</name>
        <dbReference type="ChEBI" id="CHEBI:29105"/>
    </ligand>
</feature>
<feature type="binding site">
    <location>
        <position position="61"/>
    </location>
    <ligand>
        <name>Zn(2+)</name>
        <dbReference type="ChEBI" id="CHEBI:29105"/>
    </ligand>
</feature>
<feature type="binding site">
    <location>
        <position position="62"/>
    </location>
    <ligand>
        <name>Ca(2+)</name>
        <dbReference type="ChEBI" id="CHEBI:29108"/>
    </ligand>
</feature>
<feature type="splice variant" id="VSP_018678" description="In isoform Short." evidence="1">
    <location>
        <begin position="1"/>
        <end position="52"/>
    </location>
</feature>
<feature type="splice variant" id="VSP_018986" description="In isoform Short." evidence="1">
    <original>V</original>
    <variation>M</variation>
    <location>
        <position position="53"/>
    </location>
</feature>
<feature type="helix" evidence="3">
    <location>
        <begin position="6"/>
        <end position="18"/>
    </location>
</feature>
<feature type="turn" evidence="3">
    <location>
        <begin position="19"/>
        <end position="21"/>
    </location>
</feature>
<feature type="turn" evidence="3">
    <location>
        <begin position="24"/>
        <end position="26"/>
    </location>
</feature>
<feature type="helix" evidence="3">
    <location>
        <begin position="34"/>
        <end position="36"/>
    </location>
</feature>
<feature type="strand" evidence="3">
    <location>
        <begin position="37"/>
        <end position="41"/>
    </location>
</feature>
<feature type="strand" evidence="4">
    <location>
        <begin position="45"/>
        <end position="47"/>
    </location>
</feature>
<feature type="turn" evidence="3">
    <location>
        <begin position="48"/>
        <end position="51"/>
    </location>
</feature>
<feature type="strand" evidence="3">
    <location>
        <begin position="52"/>
        <end position="57"/>
    </location>
</feature>
<feature type="helix" evidence="3">
    <location>
        <begin position="59"/>
        <end position="74"/>
    </location>
</feature>
<feature type="strand" evidence="3">
    <location>
        <begin position="75"/>
        <end position="77"/>
    </location>
</feature>
<feature type="helix" evidence="3">
    <location>
        <begin position="78"/>
        <end position="80"/>
    </location>
</feature>
<feature type="helix" evidence="3">
    <location>
        <begin position="84"/>
        <end position="96"/>
    </location>
</feature>
<feature type="helix" evidence="3">
    <location>
        <begin position="107"/>
        <end position="117"/>
    </location>
</feature>
<feature type="helix" evidence="3">
    <location>
        <begin position="121"/>
        <end position="130"/>
    </location>
</feature>
<feature type="strand" evidence="2">
    <location>
        <begin position="137"/>
        <end position="139"/>
    </location>
</feature>
<feature type="helix" evidence="3">
    <location>
        <begin position="141"/>
        <end position="155"/>
    </location>
</feature>